<sequence length="360" mass="40627">MQFLGRSISKSIRPSLNSTARKSWVLSSQQFLSTSSTESSSRTRGGGGGNRAEKSSEEWPRPMEVPYQPKIANSIDLIGYVHQPVQFDSTLDGKFWAGTVISHEPSSDSKSESDSSSNFWIPVLFEGDLAHTANSYLKKNDRVHITGQILGDVIQSGANSDQAHVQLFKSFHGSFSHQVMVRDLHYIEGSKAMPKVLPTLDQNEGVLKHSASVQRGREFGTNLWFDLVDKPNEWCDYREMKQNGSVNPKHPDFKKKDGSQALWLNNAPTEILSELKDVKFDIPKYAKQPKAGEESWKDLVDNMNKWWDNRVDKRTPKSPDFKHKETGVGLWLSDSPSWVLEKLPPPKSKTSDIYGVQEMF</sequence>
<keyword id="KW-0150">Chloroplast</keyword>
<keyword id="KW-0238">DNA-binding</keyword>
<keyword id="KW-0934">Plastid</keyword>
<keyword id="KW-1185">Reference proteome</keyword>
<keyword id="KW-0677">Repeat</keyword>
<keyword id="KW-0809">Transit peptide</keyword>
<accession>Q9FYJ2</accession>
<accession>Q8LCI8</accession>
<name>OSB4_ARATH</name>
<protein>
    <recommendedName>
        <fullName>Protein OSB4, chloroplastic</fullName>
    </recommendedName>
    <alternativeName>
        <fullName>Organellar single-stranded DNA-binding protein 4</fullName>
    </alternativeName>
</protein>
<reference key="1">
    <citation type="journal article" date="2000" name="Nature">
        <title>Sequence and analysis of chromosome 1 of the plant Arabidopsis thaliana.</title>
        <authorList>
            <person name="Theologis A."/>
            <person name="Ecker J.R."/>
            <person name="Palm C.J."/>
            <person name="Federspiel N.A."/>
            <person name="Kaul S."/>
            <person name="White O."/>
            <person name="Alonso J."/>
            <person name="Altafi H."/>
            <person name="Araujo R."/>
            <person name="Bowman C.L."/>
            <person name="Brooks S.Y."/>
            <person name="Buehler E."/>
            <person name="Chan A."/>
            <person name="Chao Q."/>
            <person name="Chen H."/>
            <person name="Cheuk R.F."/>
            <person name="Chin C.W."/>
            <person name="Chung M.K."/>
            <person name="Conn L."/>
            <person name="Conway A.B."/>
            <person name="Conway A.R."/>
            <person name="Creasy T.H."/>
            <person name="Dewar K."/>
            <person name="Dunn P."/>
            <person name="Etgu P."/>
            <person name="Feldblyum T.V."/>
            <person name="Feng J.-D."/>
            <person name="Fong B."/>
            <person name="Fujii C.Y."/>
            <person name="Gill J.E."/>
            <person name="Goldsmith A.D."/>
            <person name="Haas B."/>
            <person name="Hansen N.F."/>
            <person name="Hughes B."/>
            <person name="Huizar L."/>
            <person name="Hunter J.L."/>
            <person name="Jenkins J."/>
            <person name="Johnson-Hopson C."/>
            <person name="Khan S."/>
            <person name="Khaykin E."/>
            <person name="Kim C.J."/>
            <person name="Koo H.L."/>
            <person name="Kremenetskaia I."/>
            <person name="Kurtz D.B."/>
            <person name="Kwan A."/>
            <person name="Lam B."/>
            <person name="Langin-Hooper S."/>
            <person name="Lee A."/>
            <person name="Lee J.M."/>
            <person name="Lenz C.A."/>
            <person name="Li J.H."/>
            <person name="Li Y.-P."/>
            <person name="Lin X."/>
            <person name="Liu S.X."/>
            <person name="Liu Z.A."/>
            <person name="Luros J.S."/>
            <person name="Maiti R."/>
            <person name="Marziali A."/>
            <person name="Militscher J."/>
            <person name="Miranda M."/>
            <person name="Nguyen M."/>
            <person name="Nierman W.C."/>
            <person name="Osborne B.I."/>
            <person name="Pai G."/>
            <person name="Peterson J."/>
            <person name="Pham P.K."/>
            <person name="Rizzo M."/>
            <person name="Rooney T."/>
            <person name="Rowley D."/>
            <person name="Sakano H."/>
            <person name="Salzberg S.L."/>
            <person name="Schwartz J.R."/>
            <person name="Shinn P."/>
            <person name="Southwick A.M."/>
            <person name="Sun H."/>
            <person name="Tallon L.J."/>
            <person name="Tambunga G."/>
            <person name="Toriumi M.J."/>
            <person name="Town C.D."/>
            <person name="Utterback T."/>
            <person name="Van Aken S."/>
            <person name="Vaysberg M."/>
            <person name="Vysotskaia V.S."/>
            <person name="Walker M."/>
            <person name="Wu D."/>
            <person name="Yu G."/>
            <person name="Fraser C.M."/>
            <person name="Venter J.C."/>
            <person name="Davis R.W."/>
        </authorList>
    </citation>
    <scope>NUCLEOTIDE SEQUENCE [LARGE SCALE GENOMIC DNA]</scope>
    <source>
        <strain>cv. Columbia</strain>
    </source>
</reference>
<reference key="2">
    <citation type="journal article" date="2017" name="Plant J.">
        <title>Araport11: a complete reannotation of the Arabidopsis thaliana reference genome.</title>
        <authorList>
            <person name="Cheng C.Y."/>
            <person name="Krishnakumar V."/>
            <person name="Chan A.P."/>
            <person name="Thibaud-Nissen F."/>
            <person name="Schobel S."/>
            <person name="Town C.D."/>
        </authorList>
    </citation>
    <scope>GENOME REANNOTATION</scope>
    <source>
        <strain>cv. Columbia</strain>
    </source>
</reference>
<reference key="3">
    <citation type="submission" date="2002-03" db="EMBL/GenBank/DDBJ databases">
        <title>Full-length cDNA from Arabidopsis thaliana.</title>
        <authorList>
            <person name="Brover V.V."/>
            <person name="Troukhan M.E."/>
            <person name="Alexandrov N.A."/>
            <person name="Lu Y.-P."/>
            <person name="Flavell R.B."/>
            <person name="Feldmann K.A."/>
        </authorList>
    </citation>
    <scope>NUCLEOTIDE SEQUENCE [LARGE SCALE MRNA]</scope>
</reference>
<reference key="4">
    <citation type="journal article" date="2006" name="Plant Cell">
        <title>The plant-specific ssDNA binding protein OSB1 is involved in the stoichiometric transmission of mitochondrial DNA in Arabidopsis.</title>
        <authorList>
            <person name="Zaegel V."/>
            <person name="Guermann B."/>
            <person name="Le Ret M."/>
            <person name="Andres C."/>
            <person name="Meyer D."/>
            <person name="Erhardt M."/>
            <person name="Canaday J."/>
            <person name="Gualberto J.M."/>
            <person name="Imbault P."/>
        </authorList>
    </citation>
    <scope>IDENTIFICATION</scope>
</reference>
<comment type="function">
    <text evidence="1">Binds single-stranded DNA.</text>
</comment>
<comment type="subcellular location">
    <subcellularLocation>
        <location evidence="5">Plastid</location>
        <location evidence="5">Chloroplast</location>
    </subcellularLocation>
</comment>
<feature type="transit peptide" description="Chloroplast" evidence="2">
    <location>
        <begin position="1"/>
        <end position="61"/>
    </location>
</feature>
<feature type="chain" id="PRO_0000383611" description="Protein OSB4, chloroplastic">
    <location>
        <begin position="62"/>
        <end position="360"/>
    </location>
</feature>
<feature type="domain" description="SSB" evidence="3">
    <location>
        <begin position="71"/>
        <end position="188"/>
    </location>
</feature>
<feature type="region of interest" description="Disordered" evidence="4">
    <location>
        <begin position="28"/>
        <end position="64"/>
    </location>
</feature>
<feature type="region of interest" description="PDF region 1">
    <location>
        <begin position="224"/>
        <end position="276"/>
    </location>
</feature>
<feature type="region of interest" description="PDF region 2">
    <location>
        <begin position="296"/>
        <end position="344"/>
    </location>
</feature>
<feature type="compositionally biased region" description="Low complexity" evidence="4">
    <location>
        <begin position="33"/>
        <end position="43"/>
    </location>
</feature>
<feature type="compositionally biased region" description="Basic and acidic residues" evidence="4">
    <location>
        <begin position="51"/>
        <end position="61"/>
    </location>
</feature>
<feature type="sequence conflict" description="In Ref. 3; AAM63642." evidence="5" ref="3">
    <original>K</original>
    <variation>M</variation>
    <location>
        <position position="255"/>
    </location>
</feature>
<organism>
    <name type="scientific">Arabidopsis thaliana</name>
    <name type="common">Mouse-ear cress</name>
    <dbReference type="NCBI Taxonomy" id="3702"/>
    <lineage>
        <taxon>Eukaryota</taxon>
        <taxon>Viridiplantae</taxon>
        <taxon>Streptophyta</taxon>
        <taxon>Embryophyta</taxon>
        <taxon>Tracheophyta</taxon>
        <taxon>Spermatophyta</taxon>
        <taxon>Magnoliopsida</taxon>
        <taxon>eudicotyledons</taxon>
        <taxon>Gunneridae</taxon>
        <taxon>Pentapetalae</taxon>
        <taxon>rosids</taxon>
        <taxon>malvids</taxon>
        <taxon>Brassicales</taxon>
        <taxon>Brassicaceae</taxon>
        <taxon>Camelineae</taxon>
        <taxon>Arabidopsis</taxon>
    </lineage>
</organism>
<evidence type="ECO:0000250" key="1"/>
<evidence type="ECO:0000255" key="2"/>
<evidence type="ECO:0000255" key="3">
    <source>
        <dbReference type="PROSITE-ProRule" id="PRU00252"/>
    </source>
</evidence>
<evidence type="ECO:0000256" key="4">
    <source>
        <dbReference type="SAM" id="MobiDB-lite"/>
    </source>
</evidence>
<evidence type="ECO:0000305" key="5"/>
<gene>
    <name type="primary">OSB4</name>
    <name type="ordered locus">At1g31010</name>
    <name type="ORF">F17F8.7</name>
</gene>
<dbReference type="EMBL" id="AC000107">
    <property type="protein sequence ID" value="AAF98182.1"/>
    <property type="molecule type" value="Genomic_DNA"/>
</dbReference>
<dbReference type="EMBL" id="CP002684">
    <property type="protein sequence ID" value="AEE31306.1"/>
    <property type="molecule type" value="Genomic_DNA"/>
</dbReference>
<dbReference type="EMBL" id="AY086580">
    <property type="protein sequence ID" value="AAM63642.1"/>
    <property type="molecule type" value="mRNA"/>
</dbReference>
<dbReference type="PIR" id="G86435">
    <property type="entry name" value="G86435"/>
</dbReference>
<dbReference type="RefSeq" id="NP_564370.1">
    <property type="nucleotide sequence ID" value="NM_102839.5"/>
</dbReference>
<dbReference type="SMR" id="Q9FYJ2"/>
<dbReference type="FunCoup" id="Q9FYJ2">
    <property type="interactions" value="38"/>
</dbReference>
<dbReference type="STRING" id="3702.Q9FYJ2"/>
<dbReference type="iPTMnet" id="Q9FYJ2"/>
<dbReference type="PaxDb" id="3702-AT1G31010.1"/>
<dbReference type="ProteomicsDB" id="248829"/>
<dbReference type="EnsemblPlants" id="AT1G31010.1">
    <property type="protein sequence ID" value="AT1G31010.1"/>
    <property type="gene ID" value="AT1G31010"/>
</dbReference>
<dbReference type="GeneID" id="839987"/>
<dbReference type="Gramene" id="AT1G31010.1">
    <property type="protein sequence ID" value="AT1G31010.1"/>
    <property type="gene ID" value="AT1G31010"/>
</dbReference>
<dbReference type="KEGG" id="ath:AT1G31010"/>
<dbReference type="Araport" id="AT1G31010"/>
<dbReference type="TAIR" id="AT1G31010">
    <property type="gene designation" value="OSB4"/>
</dbReference>
<dbReference type="eggNOG" id="ENOG502QPSC">
    <property type="taxonomic scope" value="Eukaryota"/>
</dbReference>
<dbReference type="HOGENOM" id="CLU_035942_0_0_1"/>
<dbReference type="InParanoid" id="Q9FYJ2"/>
<dbReference type="OMA" id="NDRLHIT"/>
<dbReference type="PhylomeDB" id="Q9FYJ2"/>
<dbReference type="PRO" id="PR:Q9FYJ2"/>
<dbReference type="Proteomes" id="UP000006548">
    <property type="component" value="Chromosome 1"/>
</dbReference>
<dbReference type="ExpressionAtlas" id="Q9FYJ2">
    <property type="expression patterns" value="baseline and differential"/>
</dbReference>
<dbReference type="GO" id="GO:0009507">
    <property type="term" value="C:chloroplast"/>
    <property type="evidence" value="ECO:0007669"/>
    <property type="project" value="UniProtKB-SubCell"/>
</dbReference>
<dbReference type="GO" id="GO:0003697">
    <property type="term" value="F:single-stranded DNA binding"/>
    <property type="evidence" value="ECO:0007669"/>
    <property type="project" value="InterPro"/>
</dbReference>
<dbReference type="GO" id="GO:0006260">
    <property type="term" value="P:DNA replication"/>
    <property type="evidence" value="ECO:0007669"/>
    <property type="project" value="InterPro"/>
</dbReference>
<dbReference type="FunFam" id="2.40.50.140:FF:000712">
    <property type="match status" value="1"/>
</dbReference>
<dbReference type="Gene3D" id="2.40.50.140">
    <property type="entry name" value="Nucleic acid-binding proteins"/>
    <property type="match status" value="1"/>
</dbReference>
<dbReference type="InterPro" id="IPR012340">
    <property type="entry name" value="NA-bd_OB-fold"/>
</dbReference>
<dbReference type="InterPro" id="IPR000424">
    <property type="entry name" value="Primosome_PriB/ssb"/>
</dbReference>
<dbReference type="InterPro" id="IPR011344">
    <property type="entry name" value="ssDNA-bd"/>
</dbReference>
<dbReference type="PANTHER" id="PTHR10302:SF23">
    <property type="entry name" value="PROTEIN OSB4, CHLOROPLASTIC"/>
    <property type="match status" value="1"/>
</dbReference>
<dbReference type="PANTHER" id="PTHR10302">
    <property type="entry name" value="SINGLE-STRANDED DNA-BINDING PROTEIN"/>
    <property type="match status" value="1"/>
</dbReference>
<dbReference type="SUPFAM" id="SSF50249">
    <property type="entry name" value="Nucleic acid-binding proteins"/>
    <property type="match status" value="1"/>
</dbReference>
<dbReference type="PROSITE" id="PS50935">
    <property type="entry name" value="SSB"/>
    <property type="match status" value="1"/>
</dbReference>
<proteinExistence type="evidence at transcript level"/>